<accession>Q05972</accession>
<accession>P73379</accession>
<protein>
    <recommendedName>
        <fullName evidence="1">Chaperonin GroEL 1</fullName>
        <ecNumber evidence="1">5.6.1.7</ecNumber>
    </recommendedName>
    <alternativeName>
        <fullName evidence="1">60 kDa chaperonin 1</fullName>
    </alternativeName>
    <alternativeName>
        <fullName evidence="1">Chaperonin-60 1</fullName>
        <shortName evidence="1">Cpn60 1</shortName>
    </alternativeName>
</protein>
<feature type="initiator methionine" description="Removed" evidence="2 3 4">
    <location>
        <position position="1"/>
    </location>
</feature>
<feature type="chain" id="PRO_0000063575" description="Chaperonin GroEL 1">
    <location>
        <begin position="2"/>
        <end position="541"/>
    </location>
</feature>
<feature type="binding site" evidence="1">
    <location>
        <begin position="29"/>
        <end position="32"/>
    </location>
    <ligand>
        <name>ATP</name>
        <dbReference type="ChEBI" id="CHEBI:30616"/>
    </ligand>
</feature>
<feature type="binding site" evidence="1">
    <location>
        <begin position="86"/>
        <end position="90"/>
    </location>
    <ligand>
        <name>ATP</name>
        <dbReference type="ChEBI" id="CHEBI:30616"/>
    </ligand>
</feature>
<feature type="binding site" evidence="1">
    <location>
        <position position="413"/>
    </location>
    <ligand>
        <name>ATP</name>
        <dbReference type="ChEBI" id="CHEBI:30616"/>
    </ligand>
</feature>
<feature type="binding site" evidence="1">
    <location>
        <begin position="479"/>
        <end position="481"/>
    </location>
    <ligand>
        <name>ATP</name>
        <dbReference type="ChEBI" id="CHEBI:30616"/>
    </ligand>
</feature>
<feature type="binding site" evidence="1">
    <location>
        <position position="495"/>
    </location>
    <ligand>
        <name>ATP</name>
        <dbReference type="ChEBI" id="CHEBI:30616"/>
    </ligand>
</feature>
<feature type="sequence conflict" description="In Ref. 4; AA sequence." evidence="5" ref="4">
    <original>R</original>
    <variation>T</variation>
    <location>
        <position position="12"/>
    </location>
</feature>
<feature type="sequence conflict" description="In Ref. 1; BAA02180." evidence="5" ref="1">
    <original>A</original>
    <variation>D</variation>
    <location>
        <position position="91"/>
    </location>
</feature>
<comment type="function">
    <text evidence="1">Together with its co-chaperonin GroES, plays an essential role in assisting protein folding. The GroEL-GroES system forms a nano-cage that allows encapsulation of the non-native substrate proteins and provides a physical environment optimized to promote and accelerate protein folding.</text>
</comment>
<comment type="catalytic activity">
    <reaction evidence="1">
        <text>ATP + H2O + a folded polypeptide = ADP + phosphate + an unfolded polypeptide.</text>
        <dbReference type="EC" id="5.6.1.7"/>
    </reaction>
</comment>
<comment type="subunit">
    <text evidence="1">Forms a cylinder of 14 subunits composed of two heptameric rings stacked back-to-back. Interacts with the co-chaperonin GroES.</text>
</comment>
<comment type="interaction">
    <interactant intactId="EBI-862119">
        <id>Q05972</id>
    </interactant>
    <interactant intactId="EBI-862916">
        <id>P52231</id>
        <label>trxA</label>
    </interactant>
    <organismsDiffer>false</organismsDiffer>
    <experiments>4</experiments>
</comment>
<comment type="subcellular location">
    <subcellularLocation>
        <location evidence="1">Cytoplasm</location>
    </subcellularLocation>
</comment>
<comment type="induction">
    <text>By stress conditions e.g. heat shock.</text>
</comment>
<comment type="similarity">
    <text evidence="1">Belongs to the chaperonin (HSP60) family.</text>
</comment>
<reference key="1">
    <citation type="journal article" date="1993" name="J. Biol. Chem.">
        <title>A second groEL-like gene, organized in a groESL operon is present in the genome of Synechocystis sp. PCC 6803.</title>
        <authorList>
            <person name="Lehel C."/>
            <person name="Los D.A."/>
            <person name="Wada H."/>
            <person name="Gyorgyei J."/>
            <person name="Horvath I."/>
            <person name="Kovacs E."/>
            <person name="Murata N."/>
            <person name="Vigh L."/>
        </authorList>
    </citation>
    <scope>NUCLEOTIDE SEQUENCE [GENOMIC DNA]</scope>
    <scope>PROTEIN SEQUENCE OF 2-26</scope>
</reference>
<reference key="2">
    <citation type="journal article" date="1996" name="DNA Res.">
        <title>Sequence analysis of the genome of the unicellular cyanobacterium Synechocystis sp. strain PCC6803. II. Sequence determination of the entire genome and assignment of potential protein-coding regions.</title>
        <authorList>
            <person name="Kaneko T."/>
            <person name="Sato S."/>
            <person name="Kotani H."/>
            <person name="Tanaka A."/>
            <person name="Asamizu E."/>
            <person name="Nakamura Y."/>
            <person name="Miyajima N."/>
            <person name="Hirosawa M."/>
            <person name="Sugiura M."/>
            <person name="Sasamoto S."/>
            <person name="Kimura T."/>
            <person name="Hosouchi T."/>
            <person name="Matsuno A."/>
            <person name="Muraki A."/>
            <person name="Nakazaki N."/>
            <person name="Naruo K."/>
            <person name="Okumura S."/>
            <person name="Shimpo S."/>
            <person name="Takeuchi C."/>
            <person name="Wada T."/>
            <person name="Watanabe A."/>
            <person name="Yamada M."/>
            <person name="Yasuda M."/>
            <person name="Tabata S."/>
        </authorList>
    </citation>
    <scope>NUCLEOTIDE SEQUENCE [LARGE SCALE GENOMIC DNA]</scope>
    <source>
        <strain>ATCC 27184 / PCC 6803 / Kazusa</strain>
    </source>
</reference>
<reference key="3">
    <citation type="journal article" date="1997" name="Electrophoresis">
        <title>Towards a proteome project of cyanobacterium Synechocystis sp. strain PCC6803: linking 130 protein spots with their respective genes.</title>
        <authorList>
            <person name="Sazuka T."/>
            <person name="Ohara O."/>
        </authorList>
    </citation>
    <scope>PROTEIN SEQUENCE OF 2-21</scope>
</reference>
<reference key="4">
    <citation type="journal article" date="1992" name="Plant Mol. Biol.">
        <title>Heat shock protein synthesis of the cyanobacterium Synechocystis PCC 6803: purification of the GroEL-related chaperonin.</title>
        <authorList>
            <person name="Lehel C."/>
            <person name="Wada H."/>
            <person name="Kovacs E."/>
            <person name="Toroek Z."/>
            <person name="Gombos Z."/>
            <person name="Horvath I."/>
            <person name="Murata N."/>
            <person name="Vigh L."/>
        </authorList>
    </citation>
    <scope>PROTEIN SEQUENCE OF 2-26</scope>
</reference>
<sequence>MAKSIIYNDEARRALERGMDILAEAVAVTLGPKGRNVVLEKKFGSPQIINDGITIAKEIELEDHVENTGVSLIRQAASKTNDVAGDGTTTATVLAHAIVKEGLRNVAAGANPISLKRGIDKATDFLVARIKEHAQPVGDSKAIAQVGAISAGNDEEVGQMIANAMDKVGQEGVISLEEGKSMTTELEITEGMRFDKGYISPYFVTDAERMEAVLEDPRILITDKKINLVQDLVPILEQVARQGKPLLIIAEDIEKEALATLVVNRLRGVLNVAAVKAPGFGDRRKQMLEDIATLTGGQVISEDAGLKLESATVDSLGSARRINITKDNTTIVAEGNEAAVKSRCEQIRRQIEETDSSYDKEKLQERLAKLAGGVAVIKVGAATETEMKDRKLRLEDAINATKAAVEEGIVPGGGTTLAHLAPQLEDWATGNLKDEELTGALIVARALPAPLKRIAENAGQNGAVISERVKEKEFNVGYNAASLEYVDMLAAGIVDPAKVTRSALQNAASIAGMVLTTECIVVDKPEKEKAPAGAPGGDFDY</sequence>
<keyword id="KW-0067">ATP-binding</keyword>
<keyword id="KW-0143">Chaperone</keyword>
<keyword id="KW-0963">Cytoplasm</keyword>
<keyword id="KW-0903">Direct protein sequencing</keyword>
<keyword id="KW-0413">Isomerase</keyword>
<keyword id="KW-0547">Nucleotide-binding</keyword>
<keyword id="KW-1185">Reference proteome</keyword>
<keyword id="KW-0346">Stress response</keyword>
<gene>
    <name evidence="1" type="primary">groEL1</name>
    <name type="synonym">cpn60-1</name>
    <name evidence="1" type="synonym">groL1</name>
    <name type="ordered locus">slr2076</name>
</gene>
<organism>
    <name type="scientific">Synechocystis sp. (strain ATCC 27184 / PCC 6803 / Kazusa)</name>
    <dbReference type="NCBI Taxonomy" id="1111708"/>
    <lineage>
        <taxon>Bacteria</taxon>
        <taxon>Bacillati</taxon>
        <taxon>Cyanobacteriota</taxon>
        <taxon>Cyanophyceae</taxon>
        <taxon>Synechococcales</taxon>
        <taxon>Merismopediaceae</taxon>
        <taxon>Synechocystis</taxon>
    </lineage>
</organism>
<proteinExistence type="evidence at protein level"/>
<name>CH601_SYNY3</name>
<evidence type="ECO:0000255" key="1">
    <source>
        <dbReference type="HAMAP-Rule" id="MF_00600"/>
    </source>
</evidence>
<evidence type="ECO:0000269" key="2">
    <source>
    </source>
</evidence>
<evidence type="ECO:0000269" key="3">
    <source>
    </source>
</evidence>
<evidence type="ECO:0000269" key="4">
    <source>
    </source>
</evidence>
<evidence type="ECO:0000305" key="5"/>
<dbReference type="EC" id="5.6.1.7" evidence="1"/>
<dbReference type="EMBL" id="D12677">
    <property type="protein sequence ID" value="BAA02180.1"/>
    <property type="molecule type" value="Genomic_DNA"/>
</dbReference>
<dbReference type="EMBL" id="BA000022">
    <property type="protein sequence ID" value="BAA17411.1"/>
    <property type="molecule type" value="Genomic_DNA"/>
</dbReference>
<dbReference type="PIR" id="B44425">
    <property type="entry name" value="B44425"/>
</dbReference>
<dbReference type="SMR" id="Q05972"/>
<dbReference type="FunCoup" id="Q05972">
    <property type="interactions" value="462"/>
</dbReference>
<dbReference type="IntAct" id="Q05972">
    <property type="interactions" value="2"/>
</dbReference>
<dbReference type="STRING" id="1148.gene:10498274"/>
<dbReference type="PaxDb" id="1148-1652489"/>
<dbReference type="EnsemblBacteria" id="BAA17411">
    <property type="protein sequence ID" value="BAA17411"/>
    <property type="gene ID" value="BAA17411"/>
</dbReference>
<dbReference type="KEGG" id="syn:slr2076"/>
<dbReference type="eggNOG" id="COG0459">
    <property type="taxonomic scope" value="Bacteria"/>
</dbReference>
<dbReference type="InParanoid" id="Q05972"/>
<dbReference type="PhylomeDB" id="Q05972"/>
<dbReference type="Proteomes" id="UP000001425">
    <property type="component" value="Chromosome"/>
</dbReference>
<dbReference type="GO" id="GO:1990220">
    <property type="term" value="C:GroEL-GroES complex"/>
    <property type="evidence" value="ECO:0000318"/>
    <property type="project" value="GO_Central"/>
</dbReference>
<dbReference type="GO" id="GO:0005524">
    <property type="term" value="F:ATP binding"/>
    <property type="evidence" value="ECO:0000318"/>
    <property type="project" value="GO_Central"/>
</dbReference>
<dbReference type="GO" id="GO:0140662">
    <property type="term" value="F:ATP-dependent protein folding chaperone"/>
    <property type="evidence" value="ECO:0007669"/>
    <property type="project" value="InterPro"/>
</dbReference>
<dbReference type="GO" id="GO:0016853">
    <property type="term" value="F:isomerase activity"/>
    <property type="evidence" value="ECO:0007669"/>
    <property type="project" value="UniProtKB-KW"/>
</dbReference>
<dbReference type="GO" id="GO:0051082">
    <property type="term" value="F:unfolded protein binding"/>
    <property type="evidence" value="ECO:0000318"/>
    <property type="project" value="GO_Central"/>
</dbReference>
<dbReference type="GO" id="GO:0051085">
    <property type="term" value="P:chaperone cofactor-dependent protein refolding"/>
    <property type="evidence" value="ECO:0000318"/>
    <property type="project" value="GO_Central"/>
</dbReference>
<dbReference type="GO" id="GO:0042026">
    <property type="term" value="P:protein refolding"/>
    <property type="evidence" value="ECO:0007669"/>
    <property type="project" value="UniProtKB-UniRule"/>
</dbReference>
<dbReference type="GO" id="GO:0009408">
    <property type="term" value="P:response to heat"/>
    <property type="evidence" value="ECO:0000318"/>
    <property type="project" value="GO_Central"/>
</dbReference>
<dbReference type="CDD" id="cd03344">
    <property type="entry name" value="GroEL"/>
    <property type="match status" value="1"/>
</dbReference>
<dbReference type="FunFam" id="3.50.7.10:FF:000001">
    <property type="entry name" value="60 kDa chaperonin"/>
    <property type="match status" value="1"/>
</dbReference>
<dbReference type="Gene3D" id="3.50.7.10">
    <property type="entry name" value="GroEL"/>
    <property type="match status" value="1"/>
</dbReference>
<dbReference type="Gene3D" id="1.10.560.10">
    <property type="entry name" value="GroEL-like equatorial domain"/>
    <property type="match status" value="1"/>
</dbReference>
<dbReference type="Gene3D" id="3.30.260.10">
    <property type="entry name" value="TCP-1-like chaperonin intermediate domain"/>
    <property type="match status" value="1"/>
</dbReference>
<dbReference type="HAMAP" id="MF_00600">
    <property type="entry name" value="CH60"/>
    <property type="match status" value="1"/>
</dbReference>
<dbReference type="InterPro" id="IPR018370">
    <property type="entry name" value="Chaperonin_Cpn60_CS"/>
</dbReference>
<dbReference type="InterPro" id="IPR001844">
    <property type="entry name" value="Cpn60/GroEL"/>
</dbReference>
<dbReference type="InterPro" id="IPR002423">
    <property type="entry name" value="Cpn60/GroEL/TCP-1"/>
</dbReference>
<dbReference type="InterPro" id="IPR027409">
    <property type="entry name" value="GroEL-like_apical_dom_sf"/>
</dbReference>
<dbReference type="InterPro" id="IPR027413">
    <property type="entry name" value="GROEL-like_equatorial_sf"/>
</dbReference>
<dbReference type="InterPro" id="IPR027410">
    <property type="entry name" value="TCP-1-like_intermed_sf"/>
</dbReference>
<dbReference type="NCBIfam" id="TIGR02348">
    <property type="entry name" value="GroEL"/>
    <property type="match status" value="1"/>
</dbReference>
<dbReference type="NCBIfam" id="NF000592">
    <property type="entry name" value="PRK00013.1"/>
    <property type="match status" value="1"/>
</dbReference>
<dbReference type="NCBIfam" id="NF009487">
    <property type="entry name" value="PRK12849.1"/>
    <property type="match status" value="1"/>
</dbReference>
<dbReference type="NCBIfam" id="NF009488">
    <property type="entry name" value="PRK12850.1"/>
    <property type="match status" value="1"/>
</dbReference>
<dbReference type="NCBIfam" id="NF009489">
    <property type="entry name" value="PRK12851.1"/>
    <property type="match status" value="1"/>
</dbReference>
<dbReference type="PANTHER" id="PTHR45633">
    <property type="entry name" value="60 KDA HEAT SHOCK PROTEIN, MITOCHONDRIAL"/>
    <property type="match status" value="1"/>
</dbReference>
<dbReference type="Pfam" id="PF00118">
    <property type="entry name" value="Cpn60_TCP1"/>
    <property type="match status" value="1"/>
</dbReference>
<dbReference type="PRINTS" id="PR00298">
    <property type="entry name" value="CHAPERONIN60"/>
</dbReference>
<dbReference type="SUPFAM" id="SSF52029">
    <property type="entry name" value="GroEL apical domain-like"/>
    <property type="match status" value="1"/>
</dbReference>
<dbReference type="SUPFAM" id="SSF48592">
    <property type="entry name" value="GroEL equatorial domain-like"/>
    <property type="match status" value="1"/>
</dbReference>
<dbReference type="SUPFAM" id="SSF54849">
    <property type="entry name" value="GroEL-intermediate domain like"/>
    <property type="match status" value="1"/>
</dbReference>
<dbReference type="PROSITE" id="PS00296">
    <property type="entry name" value="CHAPERONINS_CPN60"/>
    <property type="match status" value="1"/>
</dbReference>